<proteinExistence type="inferred from homology"/>
<organism>
    <name type="scientific">Salmonella paratyphi B (strain ATCC BAA-1250 / SPB7)</name>
    <dbReference type="NCBI Taxonomy" id="1016998"/>
    <lineage>
        <taxon>Bacteria</taxon>
        <taxon>Pseudomonadati</taxon>
        <taxon>Pseudomonadota</taxon>
        <taxon>Gammaproteobacteria</taxon>
        <taxon>Enterobacterales</taxon>
        <taxon>Enterobacteriaceae</taxon>
        <taxon>Salmonella</taxon>
    </lineage>
</organism>
<evidence type="ECO:0000250" key="1">
    <source>
        <dbReference type="UniProtKB" id="P32719"/>
    </source>
</evidence>
<evidence type="ECO:0000255" key="2"/>
<evidence type="ECO:0000305" key="3"/>
<dbReference type="EC" id="5.1.3.-" evidence="1"/>
<dbReference type="EMBL" id="CP000886">
    <property type="protein sequence ID" value="ABX70345.1"/>
    <property type="molecule type" value="Genomic_DNA"/>
</dbReference>
<dbReference type="RefSeq" id="WP_001088049.1">
    <property type="nucleotide sequence ID" value="NC_010102.1"/>
</dbReference>
<dbReference type="SMR" id="A9MZG7"/>
<dbReference type="KEGG" id="spq:SPAB_05054"/>
<dbReference type="PATRIC" id="fig|1016998.12.peg.4744"/>
<dbReference type="HOGENOM" id="CLU_054856_3_0_6"/>
<dbReference type="BioCyc" id="SENT1016998:SPAB_RS20570-MONOMER"/>
<dbReference type="Proteomes" id="UP000008556">
    <property type="component" value="Chromosome"/>
</dbReference>
<dbReference type="GO" id="GO:0005886">
    <property type="term" value="C:plasma membrane"/>
    <property type="evidence" value="ECO:0007669"/>
    <property type="project" value="UniProtKB-SubCell"/>
</dbReference>
<dbReference type="GO" id="GO:0046872">
    <property type="term" value="F:metal ion binding"/>
    <property type="evidence" value="ECO:0007669"/>
    <property type="project" value="UniProtKB-KW"/>
</dbReference>
<dbReference type="GO" id="GO:0016857">
    <property type="term" value="F:racemase and epimerase activity, acting on carbohydrates and derivatives"/>
    <property type="evidence" value="ECO:0007669"/>
    <property type="project" value="InterPro"/>
</dbReference>
<dbReference type="GO" id="GO:0005975">
    <property type="term" value="P:carbohydrate metabolic process"/>
    <property type="evidence" value="ECO:0007669"/>
    <property type="project" value="InterPro"/>
</dbReference>
<dbReference type="CDD" id="cd00429">
    <property type="entry name" value="RPE"/>
    <property type="match status" value="1"/>
</dbReference>
<dbReference type="FunFam" id="3.20.20.70:FF:000180">
    <property type="entry name" value="Epimerase"/>
    <property type="match status" value="1"/>
</dbReference>
<dbReference type="Gene3D" id="3.20.20.70">
    <property type="entry name" value="Aldolase class I"/>
    <property type="match status" value="1"/>
</dbReference>
<dbReference type="InterPro" id="IPR013785">
    <property type="entry name" value="Aldolase_TIM"/>
</dbReference>
<dbReference type="InterPro" id="IPR000056">
    <property type="entry name" value="Ribul_P_3_epim-like"/>
</dbReference>
<dbReference type="InterPro" id="IPR011060">
    <property type="entry name" value="RibuloseP-bd_barrel"/>
</dbReference>
<dbReference type="NCBIfam" id="NF010658">
    <property type="entry name" value="PRK14057.1"/>
    <property type="match status" value="1"/>
</dbReference>
<dbReference type="PANTHER" id="PTHR11749">
    <property type="entry name" value="RIBULOSE-5-PHOSPHATE-3-EPIMERASE"/>
    <property type="match status" value="1"/>
</dbReference>
<dbReference type="Pfam" id="PF00834">
    <property type="entry name" value="Ribul_P_3_epim"/>
    <property type="match status" value="1"/>
</dbReference>
<dbReference type="SUPFAM" id="SSF51366">
    <property type="entry name" value="Ribulose-phoshate binding barrel"/>
    <property type="match status" value="1"/>
</dbReference>
<reference key="1">
    <citation type="submission" date="2007-11" db="EMBL/GenBank/DDBJ databases">
        <authorList>
            <consortium name="The Salmonella enterica serovar Paratyphi B Genome Sequencing Project"/>
            <person name="McClelland M."/>
            <person name="Sanderson E.K."/>
            <person name="Porwollik S."/>
            <person name="Spieth J."/>
            <person name="Clifton W.S."/>
            <person name="Fulton R."/>
            <person name="Cordes M."/>
            <person name="Wollam A."/>
            <person name="Shah N."/>
            <person name="Pepin K."/>
            <person name="Bhonagiri V."/>
            <person name="Nash W."/>
            <person name="Johnson M."/>
            <person name="Thiruvilangam P."/>
            <person name="Wilson R."/>
        </authorList>
    </citation>
    <scope>NUCLEOTIDE SEQUENCE [LARGE SCALE GENOMIC DNA]</scope>
    <source>
        <strain>ATCC BAA-1250 / SPB7</strain>
    </source>
</reference>
<name>LSRE_SALPB</name>
<comment type="cofactor">
    <cofactor evidence="1">
        <name>a divalent metal cation</name>
        <dbReference type="ChEBI" id="CHEBI:60240"/>
    </cofactor>
    <text evidence="1">Binds 1 divalent metal cation per subunit.</text>
</comment>
<comment type="subcellular location">
    <subcellularLocation>
        <location evidence="3">Cell membrane</location>
        <topology evidence="3">Single-pass membrane protein</topology>
    </subcellularLocation>
</comment>
<comment type="similarity">
    <text evidence="3">Belongs to the ribulose-phosphate 3-epimerase family.</text>
</comment>
<protein>
    <recommendedName>
        <fullName>Putative epimerase LsrE</fullName>
        <ecNumber evidence="1">5.1.3.-</ecNumber>
    </recommendedName>
</protein>
<sequence>MNSQFAGLTREACVALLASYPLSVGILAGQWIALHRYLQQLEALNQPLLHLDLMDGQFCPQFTVGPWAVGQLPQTFIKDVHLMVADQWTAAQACVKAGAHCITLQAEGDIHLHHTLSWLGQQTVPVIGGEMPVIRGISLCPATPLDVIIPILSDVEVIQLLAVNPGYGSKMRSSDLHERVAQLLCLLGDKREGKIIVIDGSLTQDQLPSLIAQGIDRVVSGSALFRDDRLVENTRSWRAMFKVAGDTTFLPSTA</sequence>
<gene>
    <name type="primary">lsrE</name>
    <name type="ordered locus">SPAB_05054</name>
</gene>
<keyword id="KW-1003">Cell membrane</keyword>
<keyword id="KW-0413">Isomerase</keyword>
<keyword id="KW-0472">Membrane</keyword>
<keyword id="KW-0479">Metal-binding</keyword>
<keyword id="KW-0812">Transmembrane</keyword>
<keyword id="KW-1133">Transmembrane helix</keyword>
<accession>A9MZG7</accession>
<feature type="chain" id="PRO_0000351559" description="Putative epimerase LsrE">
    <location>
        <begin position="1"/>
        <end position="254"/>
    </location>
</feature>
<feature type="transmembrane region" description="Helical" evidence="2">
    <location>
        <begin position="14"/>
        <end position="34"/>
    </location>
</feature>
<feature type="active site" description="Proton acceptor" evidence="1">
    <location>
        <position position="52"/>
    </location>
</feature>
<feature type="active site" description="Proton donor" evidence="1">
    <location>
        <position position="199"/>
    </location>
</feature>
<feature type="binding site" evidence="1">
    <location>
        <position position="50"/>
    </location>
    <ligand>
        <name>a divalent metal cation</name>
        <dbReference type="ChEBI" id="CHEBI:60240"/>
    </ligand>
</feature>
<feature type="binding site" evidence="1">
    <location>
        <position position="52"/>
    </location>
    <ligand>
        <name>a divalent metal cation</name>
        <dbReference type="ChEBI" id="CHEBI:60240"/>
    </ligand>
</feature>
<feature type="binding site" evidence="1">
    <location>
        <position position="81"/>
    </location>
    <ligand>
        <name>a divalent metal cation</name>
        <dbReference type="ChEBI" id="CHEBI:60240"/>
    </ligand>
</feature>
<feature type="binding site" evidence="1">
    <location>
        <position position="81"/>
    </location>
    <ligand>
        <name>substrate</name>
    </ligand>
</feature>
<feature type="binding site" evidence="1">
    <location>
        <begin position="166"/>
        <end position="169"/>
    </location>
    <ligand>
        <name>substrate</name>
    </ligand>
</feature>
<feature type="binding site" evidence="1">
    <location>
        <begin position="199"/>
        <end position="201"/>
    </location>
    <ligand>
        <name>substrate</name>
    </ligand>
</feature>
<feature type="binding site" evidence="1">
    <location>
        <position position="199"/>
    </location>
    <ligand>
        <name>a divalent metal cation</name>
        <dbReference type="ChEBI" id="CHEBI:60240"/>
    </ligand>
</feature>
<feature type="binding site" evidence="1">
    <location>
        <begin position="221"/>
        <end position="222"/>
    </location>
    <ligand>
        <name>substrate</name>
    </ligand>
</feature>